<reference key="1">
    <citation type="journal article" date="2003" name="Proc. Natl. Acad. Sci. U.S.A.">
        <title>The genome sequence of Blochmannia floridanus: comparative analysis of reduced genomes.</title>
        <authorList>
            <person name="Gil R."/>
            <person name="Silva F.J."/>
            <person name="Zientz E."/>
            <person name="Delmotte F."/>
            <person name="Gonzalez-Candelas F."/>
            <person name="Latorre A."/>
            <person name="Rausell C."/>
            <person name="Kamerbeek J."/>
            <person name="Gadau J."/>
            <person name="Hoelldobler B."/>
            <person name="van Ham R.C.H.J."/>
            <person name="Gross R."/>
            <person name="Moya A."/>
        </authorList>
    </citation>
    <scope>NUCLEOTIDE SEQUENCE [LARGE SCALE GENOMIC DNA]</scope>
</reference>
<feature type="chain" id="PRO_0000057356" description="tRNA pseudouridine synthase A">
    <location>
        <begin position="1"/>
        <end position="252"/>
    </location>
</feature>
<feature type="active site" description="Nucleophile" evidence="1">
    <location>
        <position position="52"/>
    </location>
</feature>
<feature type="binding site" evidence="1">
    <location>
        <position position="110"/>
    </location>
    <ligand>
        <name>substrate</name>
    </ligand>
</feature>
<sequence length="252" mass="29006">MQKLVLGVEYDGSMYCGWQKQKCVSSIQSCLEYALSKVSSESILVFCGGRTDSGVHALEQIVHFETQLKCSRSAWTLGVNCHLPNDICVRWVSEVDNSFHARFSAISRRYCYFIYNNRIRSAVFCKRVWSYSRFLDVNKMSKAAQYLLGENDFSVFRSSGSQSCSTNRNIYHLRVIRQGHYVVIDIRANAFLYRMVRNIVGSLVEVGCGNKPVTWILELLKNYRGSLNRITAPASGLYLVEIKYPRYYLFQK</sequence>
<dbReference type="EC" id="5.4.99.12" evidence="1"/>
<dbReference type="EMBL" id="BX248583">
    <property type="protein sequence ID" value="CAD83185.1"/>
    <property type="molecule type" value="Genomic_DNA"/>
</dbReference>
<dbReference type="SMR" id="Q7U356"/>
<dbReference type="STRING" id="203907.Bfl496"/>
<dbReference type="KEGG" id="bfl:Bfl496"/>
<dbReference type="eggNOG" id="COG0101">
    <property type="taxonomic scope" value="Bacteria"/>
</dbReference>
<dbReference type="HOGENOM" id="CLU_014673_0_2_6"/>
<dbReference type="OrthoDB" id="9811823at2"/>
<dbReference type="Proteomes" id="UP000002192">
    <property type="component" value="Chromosome"/>
</dbReference>
<dbReference type="GO" id="GO:0003723">
    <property type="term" value="F:RNA binding"/>
    <property type="evidence" value="ECO:0007669"/>
    <property type="project" value="InterPro"/>
</dbReference>
<dbReference type="GO" id="GO:0160147">
    <property type="term" value="F:tRNA pseudouridine(38-40) synthase activity"/>
    <property type="evidence" value="ECO:0007669"/>
    <property type="project" value="UniProtKB-EC"/>
</dbReference>
<dbReference type="GO" id="GO:0031119">
    <property type="term" value="P:tRNA pseudouridine synthesis"/>
    <property type="evidence" value="ECO:0007669"/>
    <property type="project" value="UniProtKB-UniRule"/>
</dbReference>
<dbReference type="CDD" id="cd02570">
    <property type="entry name" value="PseudoU_synth_EcTruA"/>
    <property type="match status" value="1"/>
</dbReference>
<dbReference type="FunFam" id="3.30.70.580:FF:000001">
    <property type="entry name" value="tRNA pseudouridine synthase A"/>
    <property type="match status" value="1"/>
</dbReference>
<dbReference type="Gene3D" id="3.30.70.660">
    <property type="entry name" value="Pseudouridine synthase I, catalytic domain, C-terminal subdomain"/>
    <property type="match status" value="1"/>
</dbReference>
<dbReference type="Gene3D" id="3.30.70.580">
    <property type="entry name" value="Pseudouridine synthase I, catalytic domain, N-terminal subdomain"/>
    <property type="match status" value="1"/>
</dbReference>
<dbReference type="HAMAP" id="MF_00171">
    <property type="entry name" value="TruA"/>
    <property type="match status" value="1"/>
</dbReference>
<dbReference type="InterPro" id="IPR020103">
    <property type="entry name" value="PsdUridine_synth_cat_dom_sf"/>
</dbReference>
<dbReference type="InterPro" id="IPR001406">
    <property type="entry name" value="PsdUridine_synth_TruA"/>
</dbReference>
<dbReference type="InterPro" id="IPR020097">
    <property type="entry name" value="PsdUridine_synth_TruA_a/b_dom"/>
</dbReference>
<dbReference type="InterPro" id="IPR020095">
    <property type="entry name" value="PsdUridine_synth_TruA_C"/>
</dbReference>
<dbReference type="InterPro" id="IPR020094">
    <property type="entry name" value="TruA/RsuA/RluB/E/F_N"/>
</dbReference>
<dbReference type="NCBIfam" id="TIGR00071">
    <property type="entry name" value="hisT_truA"/>
    <property type="match status" value="1"/>
</dbReference>
<dbReference type="PANTHER" id="PTHR11142">
    <property type="entry name" value="PSEUDOURIDYLATE SYNTHASE"/>
    <property type="match status" value="1"/>
</dbReference>
<dbReference type="PANTHER" id="PTHR11142:SF0">
    <property type="entry name" value="TRNA PSEUDOURIDINE SYNTHASE-LIKE 1"/>
    <property type="match status" value="1"/>
</dbReference>
<dbReference type="Pfam" id="PF01416">
    <property type="entry name" value="PseudoU_synth_1"/>
    <property type="match status" value="2"/>
</dbReference>
<dbReference type="PIRSF" id="PIRSF001430">
    <property type="entry name" value="tRNA_psdUrid_synth"/>
    <property type="match status" value="1"/>
</dbReference>
<dbReference type="SUPFAM" id="SSF55120">
    <property type="entry name" value="Pseudouridine synthase"/>
    <property type="match status" value="1"/>
</dbReference>
<organism>
    <name type="scientific">Blochmanniella floridana</name>
    <dbReference type="NCBI Taxonomy" id="203907"/>
    <lineage>
        <taxon>Bacteria</taxon>
        <taxon>Pseudomonadati</taxon>
        <taxon>Pseudomonadota</taxon>
        <taxon>Gammaproteobacteria</taxon>
        <taxon>Enterobacterales</taxon>
        <taxon>Enterobacteriaceae</taxon>
        <taxon>ant endosymbionts</taxon>
        <taxon>Candidatus Blochmanniella</taxon>
    </lineage>
</organism>
<name>TRUA_BLOFL</name>
<keyword id="KW-0413">Isomerase</keyword>
<keyword id="KW-1185">Reference proteome</keyword>
<keyword id="KW-0819">tRNA processing</keyword>
<evidence type="ECO:0000255" key="1">
    <source>
        <dbReference type="HAMAP-Rule" id="MF_00171"/>
    </source>
</evidence>
<accession>Q7U356</accession>
<protein>
    <recommendedName>
        <fullName evidence="1">tRNA pseudouridine synthase A</fullName>
        <ecNumber evidence="1">5.4.99.12</ecNumber>
    </recommendedName>
    <alternativeName>
        <fullName evidence="1">tRNA pseudouridine(38-40) synthase</fullName>
    </alternativeName>
    <alternativeName>
        <fullName evidence="1">tRNA pseudouridylate synthase I</fullName>
    </alternativeName>
    <alternativeName>
        <fullName evidence="1">tRNA-uridine isomerase I</fullName>
    </alternativeName>
</protein>
<gene>
    <name evidence="1" type="primary">truA</name>
    <name type="ordered locus">Bfl496</name>
</gene>
<comment type="function">
    <text evidence="1">Formation of pseudouridine at positions 38, 39 and 40 in the anticodon stem and loop of transfer RNAs.</text>
</comment>
<comment type="catalytic activity">
    <reaction evidence="1">
        <text>uridine(38/39/40) in tRNA = pseudouridine(38/39/40) in tRNA</text>
        <dbReference type="Rhea" id="RHEA:22376"/>
        <dbReference type="Rhea" id="RHEA-COMP:10085"/>
        <dbReference type="Rhea" id="RHEA-COMP:10087"/>
        <dbReference type="ChEBI" id="CHEBI:65314"/>
        <dbReference type="ChEBI" id="CHEBI:65315"/>
        <dbReference type="EC" id="5.4.99.12"/>
    </reaction>
</comment>
<comment type="subunit">
    <text evidence="1">Homodimer.</text>
</comment>
<comment type="similarity">
    <text evidence="1">Belongs to the tRNA pseudouridine synthase TruA family.</text>
</comment>
<proteinExistence type="inferred from homology"/>